<keyword id="KW-0687">Ribonucleoprotein</keyword>
<keyword id="KW-0689">Ribosomal protein</keyword>
<keyword id="KW-0694">RNA-binding</keyword>
<keyword id="KW-0699">rRNA-binding</keyword>
<proteinExistence type="inferred from homology"/>
<organism>
    <name type="scientific">Bacteroides fragilis (strain YCH46)</name>
    <dbReference type="NCBI Taxonomy" id="295405"/>
    <lineage>
        <taxon>Bacteria</taxon>
        <taxon>Pseudomonadati</taxon>
        <taxon>Bacteroidota</taxon>
        <taxon>Bacteroidia</taxon>
        <taxon>Bacteroidales</taxon>
        <taxon>Bacteroidaceae</taxon>
        <taxon>Bacteroides</taxon>
    </lineage>
</organism>
<gene>
    <name evidence="1" type="primary">rplI</name>
    <name type="ordered locus">BF3860</name>
</gene>
<feature type="chain" id="PRO_0000236480" description="Large ribosomal subunit protein bL9">
    <location>
        <begin position="1"/>
        <end position="147"/>
    </location>
</feature>
<comment type="function">
    <text evidence="1">Binds to the 23S rRNA.</text>
</comment>
<comment type="similarity">
    <text evidence="1">Belongs to the bacterial ribosomal protein bL9 family.</text>
</comment>
<accession>Q64PH9</accession>
<evidence type="ECO:0000255" key="1">
    <source>
        <dbReference type="HAMAP-Rule" id="MF_00503"/>
    </source>
</evidence>
<evidence type="ECO:0000305" key="2"/>
<sequence length="147" mass="15925">MEIILKEDVVNLGYKNDIVTVKSGYGRNYLIPTGKAVIASPSAKKMLAEELKQRAHKLEKIKKDAEAVAAKLEGVSLTIATKVSSTGTIFGSVGNIQIAEELAKLGHEIDRKIIVVKDAVKEVGAYKAIVKLHKEVSVEIPFEVVAE</sequence>
<protein>
    <recommendedName>
        <fullName evidence="1">Large ribosomal subunit protein bL9</fullName>
    </recommendedName>
    <alternativeName>
        <fullName evidence="2">50S ribosomal protein L9</fullName>
    </alternativeName>
</protein>
<reference key="1">
    <citation type="journal article" date="2004" name="Proc. Natl. Acad. Sci. U.S.A.">
        <title>Genomic analysis of Bacteroides fragilis reveals extensive DNA inversions regulating cell surface adaptation.</title>
        <authorList>
            <person name="Kuwahara T."/>
            <person name="Yamashita A."/>
            <person name="Hirakawa H."/>
            <person name="Nakayama H."/>
            <person name="Toh H."/>
            <person name="Okada N."/>
            <person name="Kuhara S."/>
            <person name="Hattori M."/>
            <person name="Hayashi T."/>
            <person name="Ohnishi Y."/>
        </authorList>
    </citation>
    <scope>NUCLEOTIDE SEQUENCE [LARGE SCALE GENOMIC DNA]</scope>
    <source>
        <strain>YCH46</strain>
    </source>
</reference>
<dbReference type="EMBL" id="AP006841">
    <property type="protein sequence ID" value="BAD50602.1"/>
    <property type="molecule type" value="Genomic_DNA"/>
</dbReference>
<dbReference type="RefSeq" id="WP_008769978.1">
    <property type="nucleotide sequence ID" value="NC_006347.1"/>
</dbReference>
<dbReference type="RefSeq" id="YP_101136.1">
    <property type="nucleotide sequence ID" value="NC_006347.1"/>
</dbReference>
<dbReference type="SMR" id="Q64PH9"/>
<dbReference type="STRING" id="295405.BF3860"/>
<dbReference type="KEGG" id="bfr:BF3860"/>
<dbReference type="PATRIC" id="fig|295405.11.peg.3704"/>
<dbReference type="HOGENOM" id="CLU_078938_3_0_10"/>
<dbReference type="OrthoDB" id="9788336at2"/>
<dbReference type="Proteomes" id="UP000002197">
    <property type="component" value="Chromosome"/>
</dbReference>
<dbReference type="GO" id="GO:1990904">
    <property type="term" value="C:ribonucleoprotein complex"/>
    <property type="evidence" value="ECO:0007669"/>
    <property type="project" value="UniProtKB-KW"/>
</dbReference>
<dbReference type="GO" id="GO:0005840">
    <property type="term" value="C:ribosome"/>
    <property type="evidence" value="ECO:0007669"/>
    <property type="project" value="UniProtKB-KW"/>
</dbReference>
<dbReference type="GO" id="GO:0019843">
    <property type="term" value="F:rRNA binding"/>
    <property type="evidence" value="ECO:0007669"/>
    <property type="project" value="UniProtKB-UniRule"/>
</dbReference>
<dbReference type="GO" id="GO:0003735">
    <property type="term" value="F:structural constituent of ribosome"/>
    <property type="evidence" value="ECO:0007669"/>
    <property type="project" value="InterPro"/>
</dbReference>
<dbReference type="GO" id="GO:0006412">
    <property type="term" value="P:translation"/>
    <property type="evidence" value="ECO:0007669"/>
    <property type="project" value="UniProtKB-UniRule"/>
</dbReference>
<dbReference type="FunFam" id="3.10.430.100:FF:000006">
    <property type="entry name" value="50S ribosomal protein L9"/>
    <property type="match status" value="1"/>
</dbReference>
<dbReference type="FunFam" id="3.40.5.10:FF:000004">
    <property type="entry name" value="50S ribosomal protein L9"/>
    <property type="match status" value="1"/>
</dbReference>
<dbReference type="Gene3D" id="3.10.430.100">
    <property type="entry name" value="Ribosomal protein L9, C-terminal domain"/>
    <property type="match status" value="1"/>
</dbReference>
<dbReference type="Gene3D" id="3.40.5.10">
    <property type="entry name" value="Ribosomal protein L9, N-terminal domain"/>
    <property type="match status" value="1"/>
</dbReference>
<dbReference type="HAMAP" id="MF_00503">
    <property type="entry name" value="Ribosomal_bL9"/>
    <property type="match status" value="1"/>
</dbReference>
<dbReference type="InterPro" id="IPR000244">
    <property type="entry name" value="Ribosomal_bL9"/>
</dbReference>
<dbReference type="InterPro" id="IPR009027">
    <property type="entry name" value="Ribosomal_bL9/RNase_H1_N"/>
</dbReference>
<dbReference type="InterPro" id="IPR020594">
    <property type="entry name" value="Ribosomal_bL9_bac/chp"/>
</dbReference>
<dbReference type="InterPro" id="IPR020069">
    <property type="entry name" value="Ribosomal_bL9_C"/>
</dbReference>
<dbReference type="InterPro" id="IPR036791">
    <property type="entry name" value="Ribosomal_bL9_C_sf"/>
</dbReference>
<dbReference type="InterPro" id="IPR020070">
    <property type="entry name" value="Ribosomal_bL9_N"/>
</dbReference>
<dbReference type="InterPro" id="IPR036935">
    <property type="entry name" value="Ribosomal_bL9_N_sf"/>
</dbReference>
<dbReference type="NCBIfam" id="TIGR00158">
    <property type="entry name" value="L9"/>
    <property type="match status" value="1"/>
</dbReference>
<dbReference type="PANTHER" id="PTHR21368">
    <property type="entry name" value="50S RIBOSOMAL PROTEIN L9"/>
    <property type="match status" value="1"/>
</dbReference>
<dbReference type="Pfam" id="PF03948">
    <property type="entry name" value="Ribosomal_L9_C"/>
    <property type="match status" value="1"/>
</dbReference>
<dbReference type="Pfam" id="PF01281">
    <property type="entry name" value="Ribosomal_L9_N"/>
    <property type="match status" value="1"/>
</dbReference>
<dbReference type="SUPFAM" id="SSF55658">
    <property type="entry name" value="L9 N-domain-like"/>
    <property type="match status" value="1"/>
</dbReference>
<dbReference type="SUPFAM" id="SSF55653">
    <property type="entry name" value="Ribosomal protein L9 C-domain"/>
    <property type="match status" value="1"/>
</dbReference>
<dbReference type="PROSITE" id="PS00651">
    <property type="entry name" value="RIBOSOMAL_L9"/>
    <property type="match status" value="1"/>
</dbReference>
<name>RL9_BACFR</name>